<proteinExistence type="evidence at transcript level"/>
<comment type="similarity">
    <text evidence="1">Belongs to the PIH1 family.</text>
</comment>
<feature type="chain" id="PRO_0000307333" description="PIH1 domain-containing protein 2">
    <location>
        <begin position="1"/>
        <end position="315"/>
    </location>
</feature>
<sequence>MESSSKGLLTQVTQFWNLLDDLAESNPESYQKFIQQQLKEGKELCAAPEPQLCLQTRILKPKEKLLFINLCQWKRIPAPESATHPVPLSIGRPEDISETSDVYTVIDVAYHPDVLQAAEKDQVKKDQLIRMAMRCIEEQFQFTLSNCYYVTKFRIKGSIQRMKQNLMGIQTNPADLREKMRNELTLEKIRSSTVSNSDQFPQLLLPEDQVSSKTACLIEEISSTEIKVEMKRPAYELKIVADQNEKPLKIELKVELPGVNSVSLCDLSVSEDDILIEVSEKYRLYLNLPESVDTEMTTAKFIKEKATLIVTMPLV</sequence>
<organism>
    <name type="scientific">Bos taurus</name>
    <name type="common">Bovine</name>
    <dbReference type="NCBI Taxonomy" id="9913"/>
    <lineage>
        <taxon>Eukaryota</taxon>
        <taxon>Metazoa</taxon>
        <taxon>Chordata</taxon>
        <taxon>Craniata</taxon>
        <taxon>Vertebrata</taxon>
        <taxon>Euteleostomi</taxon>
        <taxon>Mammalia</taxon>
        <taxon>Eutheria</taxon>
        <taxon>Laurasiatheria</taxon>
        <taxon>Artiodactyla</taxon>
        <taxon>Ruminantia</taxon>
        <taxon>Pecora</taxon>
        <taxon>Bovidae</taxon>
        <taxon>Bovinae</taxon>
        <taxon>Bos</taxon>
    </lineage>
</organism>
<reference key="1">
    <citation type="submission" date="2005-11" db="EMBL/GenBank/DDBJ databases">
        <authorList>
            <consortium name="NIH - Mammalian Gene Collection (MGC) project"/>
        </authorList>
    </citation>
    <scope>NUCLEOTIDE SEQUENCE [LARGE SCALE MRNA]</scope>
    <source>
        <strain>Crossbred X Angus</strain>
        <tissue>Liver</tissue>
    </source>
</reference>
<evidence type="ECO:0000305" key="1"/>
<protein>
    <recommendedName>
        <fullName>PIH1 domain-containing protein 2</fullName>
    </recommendedName>
</protein>
<accession>Q32LH3</accession>
<dbReference type="EMBL" id="BC109576">
    <property type="protein sequence ID" value="AAI09577.1"/>
    <property type="molecule type" value="mRNA"/>
</dbReference>
<dbReference type="RefSeq" id="NP_001033278.1">
    <property type="nucleotide sequence ID" value="NM_001038189.2"/>
</dbReference>
<dbReference type="SMR" id="Q32LH3"/>
<dbReference type="FunCoup" id="Q32LH3">
    <property type="interactions" value="545"/>
</dbReference>
<dbReference type="STRING" id="9913.ENSBTAP00000006791"/>
<dbReference type="PaxDb" id="9913-ENSBTAP00000006791"/>
<dbReference type="GeneID" id="539917"/>
<dbReference type="KEGG" id="bta:539917"/>
<dbReference type="CTD" id="120379"/>
<dbReference type="eggNOG" id="KOG4356">
    <property type="taxonomic scope" value="Eukaryota"/>
</dbReference>
<dbReference type="InParanoid" id="Q32LH3"/>
<dbReference type="OrthoDB" id="545063at2759"/>
<dbReference type="Proteomes" id="UP000009136">
    <property type="component" value="Unplaced"/>
</dbReference>
<dbReference type="GO" id="GO:0005737">
    <property type="term" value="C:cytoplasm"/>
    <property type="evidence" value="ECO:0000318"/>
    <property type="project" value="GO_Central"/>
</dbReference>
<dbReference type="GO" id="GO:0097255">
    <property type="term" value="C:R2TP complex"/>
    <property type="evidence" value="ECO:0000318"/>
    <property type="project" value="GO_Central"/>
</dbReference>
<dbReference type="GO" id="GO:1990904">
    <property type="term" value="C:ribonucleoprotein complex"/>
    <property type="evidence" value="ECO:0000318"/>
    <property type="project" value="GO_Central"/>
</dbReference>
<dbReference type="GO" id="GO:0000492">
    <property type="term" value="P:box C/D snoRNP assembly"/>
    <property type="evidence" value="ECO:0000318"/>
    <property type="project" value="GO_Central"/>
</dbReference>
<dbReference type="GO" id="GO:0006364">
    <property type="term" value="P:rRNA processing"/>
    <property type="evidence" value="ECO:0000318"/>
    <property type="project" value="GO_Central"/>
</dbReference>
<dbReference type="CDD" id="cd06464">
    <property type="entry name" value="ACD_sHsps-like"/>
    <property type="match status" value="1"/>
</dbReference>
<dbReference type="InterPro" id="IPR050734">
    <property type="entry name" value="PIH1/Kintoun_subfamily"/>
</dbReference>
<dbReference type="InterPro" id="IPR012981">
    <property type="entry name" value="PIH1_N"/>
</dbReference>
<dbReference type="InterPro" id="IPR041442">
    <property type="entry name" value="PIH1D1/2/3_CS-like"/>
</dbReference>
<dbReference type="PANTHER" id="PTHR22997">
    <property type="entry name" value="PIH1 DOMAIN-CONTAINING PROTEIN 1"/>
    <property type="match status" value="1"/>
</dbReference>
<dbReference type="PANTHER" id="PTHR22997:SF6">
    <property type="entry name" value="PIH1 DOMAIN-CONTAINING PROTEIN 2"/>
    <property type="match status" value="1"/>
</dbReference>
<dbReference type="Pfam" id="PF08190">
    <property type="entry name" value="PIH1"/>
    <property type="match status" value="1"/>
</dbReference>
<dbReference type="Pfam" id="PF18201">
    <property type="entry name" value="PIH1_CS"/>
    <property type="match status" value="1"/>
</dbReference>
<keyword id="KW-1185">Reference proteome</keyword>
<name>PIHD2_BOVIN</name>
<gene>
    <name type="primary">PIH1D2</name>
</gene>